<accession>Q9V277</accession>
<accession>G8ZG32</accession>
<protein>
    <recommendedName>
        <fullName evidence="1">Polyamine aminopropyltransferase</fullName>
    </recommendedName>
    <alternativeName>
        <fullName evidence="1">Putrescine aminopropyltransferase</fullName>
        <shortName evidence="1">PAPT</shortName>
    </alternativeName>
    <alternativeName>
        <fullName evidence="1">Spermidine synthase</fullName>
        <shortName evidence="1">SPDS</shortName>
        <shortName evidence="1">SPDSY</shortName>
        <ecNumber evidence="1">2.5.1.16</ecNumber>
    </alternativeName>
</protein>
<sequence>MEFIEWYPRGYGVAFKVKEKIFEGHSKFQKIEVYETEGFGRLLALDGTVQLVTEGEESYHESLVHPVMLAHPNPRRVLVIGGGDGGTIREVLRHEEVEEAIMVEIDEEVIEVAIKFIGIDGGLLDKMMKGECKRAKLIIGDGVEFIKENSGFDVVIVDSTDPVGPAKMLFSREFYERAYEALNDPGIYVTQAGSVYLFTDELVTAYENMSRVFDKVYAYSFPVIGYASPWAFLVGIKGDLDFRKIDLERAKKLNLKYYDPENHETIFQMPRYVREMLKP</sequence>
<keyword id="KW-0963">Cytoplasm</keyword>
<keyword id="KW-0620">Polyamine biosynthesis</keyword>
<keyword id="KW-0745">Spermidine biosynthesis</keyword>
<keyword id="KW-0808">Transferase</keyword>
<proteinExistence type="inferred from homology"/>
<feature type="chain" id="PRO_0000156528" description="Polyamine aminopropyltransferase">
    <location>
        <begin position="1"/>
        <end position="279"/>
    </location>
</feature>
<feature type="domain" description="PABS" evidence="1">
    <location>
        <begin position="4"/>
        <end position="237"/>
    </location>
</feature>
<feature type="active site" description="Proton acceptor" evidence="1">
    <location>
        <position position="158"/>
    </location>
</feature>
<feature type="binding site" evidence="1">
    <location>
        <position position="29"/>
    </location>
    <ligand>
        <name>S-methyl-5'-thioadenosine</name>
        <dbReference type="ChEBI" id="CHEBI:17509"/>
    </ligand>
</feature>
<feature type="binding site" evidence="1">
    <location>
        <position position="60"/>
    </location>
    <ligand>
        <name>spermidine</name>
        <dbReference type="ChEBI" id="CHEBI:57834"/>
    </ligand>
</feature>
<feature type="binding site" evidence="1">
    <location>
        <position position="84"/>
    </location>
    <ligand>
        <name>spermidine</name>
        <dbReference type="ChEBI" id="CHEBI:57834"/>
    </ligand>
</feature>
<feature type="binding site" evidence="1">
    <location>
        <position position="104"/>
    </location>
    <ligand>
        <name>S-methyl-5'-thioadenosine</name>
        <dbReference type="ChEBI" id="CHEBI:17509"/>
    </ligand>
</feature>
<feature type="binding site" evidence="1">
    <location>
        <begin position="141"/>
        <end position="142"/>
    </location>
    <ligand>
        <name>S-methyl-5'-thioadenosine</name>
        <dbReference type="ChEBI" id="CHEBI:17509"/>
    </ligand>
</feature>
<feature type="binding site" evidence="1">
    <location>
        <begin position="158"/>
        <end position="161"/>
    </location>
    <ligand>
        <name>spermidine</name>
        <dbReference type="ChEBI" id="CHEBI:57834"/>
    </ligand>
</feature>
<feature type="binding site" evidence="1">
    <location>
        <position position="165"/>
    </location>
    <ligand>
        <name>S-methyl-5'-thioadenosine</name>
        <dbReference type="ChEBI" id="CHEBI:17509"/>
    </ligand>
</feature>
<organism>
    <name type="scientific">Pyrococcus abyssi (strain GE5 / Orsay)</name>
    <dbReference type="NCBI Taxonomy" id="272844"/>
    <lineage>
        <taxon>Archaea</taxon>
        <taxon>Methanobacteriati</taxon>
        <taxon>Methanobacteriota</taxon>
        <taxon>Thermococci</taxon>
        <taxon>Thermococcales</taxon>
        <taxon>Thermococcaceae</taxon>
        <taxon>Pyrococcus</taxon>
    </lineage>
</organism>
<dbReference type="EC" id="2.5.1.16" evidence="1"/>
<dbReference type="EMBL" id="AJ248283">
    <property type="protein sequence ID" value="CAB49121.1"/>
    <property type="molecule type" value="Genomic_DNA"/>
</dbReference>
<dbReference type="EMBL" id="HE613800">
    <property type="protein sequence ID" value="CCE69573.1"/>
    <property type="molecule type" value="Genomic_DNA"/>
</dbReference>
<dbReference type="PIR" id="B75209">
    <property type="entry name" value="B75209"/>
</dbReference>
<dbReference type="SMR" id="Q9V277"/>
<dbReference type="STRING" id="272844.PAB2221"/>
<dbReference type="KEGG" id="pab:PAB2221"/>
<dbReference type="PATRIC" id="fig|272844.11.peg.211"/>
<dbReference type="eggNOG" id="arCOG00050">
    <property type="taxonomic scope" value="Archaea"/>
</dbReference>
<dbReference type="HOGENOM" id="CLU_048199_0_1_2"/>
<dbReference type="PhylomeDB" id="Q9V277"/>
<dbReference type="UniPathway" id="UPA00248">
    <property type="reaction ID" value="UER00314"/>
</dbReference>
<dbReference type="Proteomes" id="UP000000810">
    <property type="component" value="Chromosome"/>
</dbReference>
<dbReference type="Proteomes" id="UP000009139">
    <property type="component" value="Chromosome"/>
</dbReference>
<dbReference type="GO" id="GO:0005737">
    <property type="term" value="C:cytoplasm"/>
    <property type="evidence" value="ECO:0007669"/>
    <property type="project" value="UniProtKB-SubCell"/>
</dbReference>
<dbReference type="GO" id="GO:0004766">
    <property type="term" value="F:spermidine synthase activity"/>
    <property type="evidence" value="ECO:0007669"/>
    <property type="project" value="UniProtKB-UniRule"/>
</dbReference>
<dbReference type="GO" id="GO:0008295">
    <property type="term" value="P:spermidine biosynthetic process"/>
    <property type="evidence" value="ECO:0007669"/>
    <property type="project" value="UniProtKB-UniRule"/>
</dbReference>
<dbReference type="CDD" id="cd02440">
    <property type="entry name" value="AdoMet_MTases"/>
    <property type="match status" value="1"/>
</dbReference>
<dbReference type="Gene3D" id="2.30.140.10">
    <property type="entry name" value="Spermidine synthase, tetramerisation domain"/>
    <property type="match status" value="1"/>
</dbReference>
<dbReference type="Gene3D" id="3.40.50.150">
    <property type="entry name" value="Vaccinia Virus protein VP39"/>
    <property type="match status" value="1"/>
</dbReference>
<dbReference type="HAMAP" id="MF_00198">
    <property type="entry name" value="Spermidine_synth"/>
    <property type="match status" value="1"/>
</dbReference>
<dbReference type="InterPro" id="IPR030374">
    <property type="entry name" value="PABS"/>
</dbReference>
<dbReference type="InterPro" id="IPR030373">
    <property type="entry name" value="PABS_CS"/>
</dbReference>
<dbReference type="InterPro" id="IPR029063">
    <property type="entry name" value="SAM-dependent_MTases_sf"/>
</dbReference>
<dbReference type="InterPro" id="IPR001045">
    <property type="entry name" value="Spermi_synthase"/>
</dbReference>
<dbReference type="InterPro" id="IPR035246">
    <property type="entry name" value="Spermidine_synt_N"/>
</dbReference>
<dbReference type="InterPro" id="IPR037163">
    <property type="entry name" value="Spermidine_synt_N_sf"/>
</dbReference>
<dbReference type="NCBIfam" id="NF002010">
    <property type="entry name" value="PRK00811.1"/>
    <property type="match status" value="1"/>
</dbReference>
<dbReference type="NCBIfam" id="TIGR00417">
    <property type="entry name" value="speE"/>
    <property type="match status" value="1"/>
</dbReference>
<dbReference type="PANTHER" id="PTHR11558:SF11">
    <property type="entry name" value="SPERMIDINE SYNTHASE"/>
    <property type="match status" value="1"/>
</dbReference>
<dbReference type="PANTHER" id="PTHR11558">
    <property type="entry name" value="SPERMIDINE/SPERMINE SYNTHASE"/>
    <property type="match status" value="1"/>
</dbReference>
<dbReference type="Pfam" id="PF17284">
    <property type="entry name" value="Spermine_synt_N"/>
    <property type="match status" value="1"/>
</dbReference>
<dbReference type="Pfam" id="PF01564">
    <property type="entry name" value="Spermine_synth"/>
    <property type="match status" value="1"/>
</dbReference>
<dbReference type="SUPFAM" id="SSF53335">
    <property type="entry name" value="S-adenosyl-L-methionine-dependent methyltransferases"/>
    <property type="match status" value="1"/>
</dbReference>
<dbReference type="PROSITE" id="PS01330">
    <property type="entry name" value="PABS_1"/>
    <property type="match status" value="1"/>
</dbReference>
<dbReference type="PROSITE" id="PS51006">
    <property type="entry name" value="PABS_2"/>
    <property type="match status" value="1"/>
</dbReference>
<name>SPEE_PYRAB</name>
<reference key="1">
    <citation type="journal article" date="2003" name="Mol. Microbiol.">
        <title>An integrated analysis of the genome of the hyperthermophilic archaeon Pyrococcus abyssi.</title>
        <authorList>
            <person name="Cohen G.N."/>
            <person name="Barbe V."/>
            <person name="Flament D."/>
            <person name="Galperin M."/>
            <person name="Heilig R."/>
            <person name="Lecompte O."/>
            <person name="Poch O."/>
            <person name="Prieur D."/>
            <person name="Querellou J."/>
            <person name="Ripp R."/>
            <person name="Thierry J.-C."/>
            <person name="Van der Oost J."/>
            <person name="Weissenbach J."/>
            <person name="Zivanovic Y."/>
            <person name="Forterre P."/>
        </authorList>
    </citation>
    <scope>NUCLEOTIDE SEQUENCE [LARGE SCALE GENOMIC DNA]</scope>
    <source>
        <strain>GE5 / Orsay</strain>
    </source>
</reference>
<reference key="2">
    <citation type="journal article" date="2012" name="Curr. Microbiol.">
        <title>Re-annotation of two hyperthermophilic archaea Pyrococcus abyssi GE5 and Pyrococcus furiosus DSM 3638.</title>
        <authorList>
            <person name="Gao J."/>
            <person name="Wang J."/>
        </authorList>
    </citation>
    <scope>GENOME REANNOTATION</scope>
    <source>
        <strain>GE5 / Orsay</strain>
    </source>
</reference>
<comment type="function">
    <text evidence="1">Catalyzes the irreversible transfer of a propylamine group from the amino donor S-adenosylmethioninamine (decarboxy-AdoMet) to putrescine (1,4-diaminobutane) to yield spermidine.</text>
</comment>
<comment type="catalytic activity">
    <reaction evidence="1">
        <text>S-adenosyl 3-(methylsulfanyl)propylamine + putrescine = S-methyl-5'-thioadenosine + spermidine + H(+)</text>
        <dbReference type="Rhea" id="RHEA:12721"/>
        <dbReference type="ChEBI" id="CHEBI:15378"/>
        <dbReference type="ChEBI" id="CHEBI:17509"/>
        <dbReference type="ChEBI" id="CHEBI:57443"/>
        <dbReference type="ChEBI" id="CHEBI:57834"/>
        <dbReference type="ChEBI" id="CHEBI:326268"/>
        <dbReference type="EC" id="2.5.1.16"/>
    </reaction>
</comment>
<comment type="pathway">
    <text evidence="1">Amine and polyamine biosynthesis; spermidine biosynthesis; spermidine from putrescine: step 1/1.</text>
</comment>
<comment type="subunit">
    <text evidence="1">Homodimer or homotetramer.</text>
</comment>
<comment type="subcellular location">
    <subcellularLocation>
        <location evidence="1">Cytoplasm</location>
    </subcellularLocation>
</comment>
<comment type="similarity">
    <text evidence="1">Belongs to the spermidine/spermine synthase family.</text>
</comment>
<gene>
    <name evidence="1" type="primary">speE</name>
    <name type="ordered locus">PYRAB01970</name>
    <name type="ORF">PAB2221</name>
</gene>
<evidence type="ECO:0000255" key="1">
    <source>
        <dbReference type="HAMAP-Rule" id="MF_00198"/>
    </source>
</evidence>